<feature type="chain" id="PRO_0000442943" description="Propane 2-monooxygenase, hydroxylase component large subunit">
    <location>
        <begin position="1"/>
        <end position="542"/>
    </location>
</feature>
<feature type="binding site" evidence="1">
    <location>
        <position position="97"/>
    </location>
    <ligand>
        <name>Fe cation</name>
        <dbReference type="ChEBI" id="CHEBI:24875"/>
        <label>1</label>
        <note>catalytic</note>
    </ligand>
</feature>
<feature type="binding site" evidence="1">
    <location>
        <position position="127"/>
    </location>
    <ligand>
        <name>Fe cation</name>
        <dbReference type="ChEBI" id="CHEBI:24875"/>
        <label>1</label>
        <note>catalytic</note>
    </ligand>
</feature>
<feature type="binding site" evidence="1">
    <location>
        <position position="127"/>
    </location>
    <ligand>
        <name>Fe cation</name>
        <dbReference type="ChEBI" id="CHEBI:24875"/>
        <label>2</label>
        <note>catalytic</note>
    </ligand>
</feature>
<feature type="binding site" evidence="1">
    <location>
        <position position="130"/>
    </location>
    <ligand>
        <name>Fe cation</name>
        <dbReference type="ChEBI" id="CHEBI:24875"/>
        <label>1</label>
        <note>catalytic</note>
    </ligand>
</feature>
<feature type="binding site" evidence="1">
    <location>
        <position position="192"/>
    </location>
    <ligand>
        <name>Fe cation</name>
        <dbReference type="ChEBI" id="CHEBI:24875"/>
        <label>2</label>
        <note>catalytic</note>
    </ligand>
</feature>
<feature type="binding site" evidence="1">
    <location>
        <position position="226"/>
    </location>
    <ligand>
        <name>Fe cation</name>
        <dbReference type="ChEBI" id="CHEBI:24875"/>
        <label>1</label>
        <note>catalytic</note>
    </ligand>
</feature>
<feature type="binding site" evidence="1">
    <location>
        <position position="226"/>
    </location>
    <ligand>
        <name>Fe cation</name>
        <dbReference type="ChEBI" id="CHEBI:24875"/>
        <label>2</label>
        <note>catalytic</note>
    </ligand>
</feature>
<feature type="binding site" evidence="1">
    <location>
        <position position="229"/>
    </location>
    <ligand>
        <name>Fe cation</name>
        <dbReference type="ChEBI" id="CHEBI:24875"/>
        <label>2</label>
        <note>catalytic</note>
    </ligand>
</feature>
<name>MIMA_MYCS2</name>
<organism>
    <name type="scientific">Mycolicibacterium smegmatis (strain ATCC 700084 / mc(2)155)</name>
    <name type="common">Mycobacterium smegmatis</name>
    <dbReference type="NCBI Taxonomy" id="246196"/>
    <lineage>
        <taxon>Bacteria</taxon>
        <taxon>Bacillati</taxon>
        <taxon>Actinomycetota</taxon>
        <taxon>Actinomycetes</taxon>
        <taxon>Mycobacteriales</taxon>
        <taxon>Mycobacteriaceae</taxon>
        <taxon>Mycolicibacterium</taxon>
    </lineage>
</organism>
<sequence>MSRQSLTKAHAKISELTWEPTFATPATRFGTDYTFEKAPKKDPLKQIMRSYFSMEEEKDNRVYGAMDGAIRGNMFRQVQQRWLEWQKLFLSIIPFPEISAARAMPMAIDAVPNPEIHNGLAVQMIDEVRHSTIQMNLKKLYMNNYIDPSGFDMTEKAFANNYAGTIGRQFGEGFITGDAITAANIYLTVVAETAFTNTLFVAMPDEAAANGDYLLPTVFHSVQSDESRHISNGYSILLMALADERNRPLLERDLRYAWWNNHCVVDAAIGTFIEYGTKDRRKDRESYAEMWRRWIYDDYYRSYLLPLEKYGLTIPHDLVEEAWKRIVEKGYVHEVARFFATGWPVNYWRIDTMTDTDFEWFEHKYPGWYSKFGKWWENYNRLAYPGRNKPIAFEEVGYQYPHRCWTCMVPALIREDMIVEKVDGQWRTYCSETCYWTDAVAFRGEYEGRETPNMGRLTGFREWETLHHGKDLADIVTDLGYVRDDGKTLVGQPHLNLDPQKMWTLDDVRGNTFNSPNVLLNQMTDDERDAHVAAYRAGGVPA</sequence>
<gene>
    <name evidence="7" type="primary">mimA</name>
    <name evidence="11" type="ordered locus">MSMEG_1971</name>
    <name evidence="12" type="ordered locus">MSMEI_1927</name>
</gene>
<reference key="1">
    <citation type="submission" date="2006-10" db="EMBL/GenBank/DDBJ databases">
        <authorList>
            <person name="Fleischmann R.D."/>
            <person name="Dodson R.J."/>
            <person name="Haft D.H."/>
            <person name="Merkel J.S."/>
            <person name="Nelson W.C."/>
            <person name="Fraser C.M."/>
        </authorList>
    </citation>
    <scope>NUCLEOTIDE SEQUENCE [LARGE SCALE GENOMIC DNA]</scope>
    <source>
        <strain evidence="13">ATCC 700084 / mc(2)155</strain>
    </source>
</reference>
<reference key="2">
    <citation type="journal article" date="2007" name="Genome Biol.">
        <title>Interrupted coding sequences in Mycobacterium smegmatis: authentic mutations or sequencing errors?</title>
        <authorList>
            <person name="Deshayes C."/>
            <person name="Perrodou E."/>
            <person name="Gallien S."/>
            <person name="Euphrasie D."/>
            <person name="Schaeffer C."/>
            <person name="Van-Dorsselaer A."/>
            <person name="Poch O."/>
            <person name="Lecompte O."/>
            <person name="Reyrat J.-M."/>
        </authorList>
    </citation>
    <scope>NUCLEOTIDE SEQUENCE [LARGE SCALE GENOMIC DNA]</scope>
    <source>
        <strain evidence="14">ATCC 700084 / mc(2)155</strain>
    </source>
</reference>
<reference key="3">
    <citation type="journal article" date="2009" name="Genome Res.">
        <title>Ortho-proteogenomics: multiple proteomes investigation through orthology and a new MS-based protocol.</title>
        <authorList>
            <person name="Gallien S."/>
            <person name="Perrodou E."/>
            <person name="Carapito C."/>
            <person name="Deshayes C."/>
            <person name="Reyrat J.-M."/>
            <person name="Van Dorsselaer A."/>
            <person name="Poch O."/>
            <person name="Schaeffer C."/>
            <person name="Lecompte O."/>
        </authorList>
    </citation>
    <scope>NUCLEOTIDE SEQUENCE [LARGE SCALE GENOMIC DNA]</scope>
    <source>
        <strain evidence="14">ATCC 700084 / mc(2)155</strain>
    </source>
</reference>
<reference key="4">
    <citation type="journal article" date="2011" name="Appl. Environ. Microbiol.">
        <title>Identification of the monooxygenase gene clusters responsible for the regioselective oxidation of phenol to hydroquinone in mycobacteria.</title>
        <authorList>
            <person name="Furuya T."/>
            <person name="Hirose S."/>
            <person name="Osanai H."/>
            <person name="Semba H."/>
            <person name="Kino K."/>
        </authorList>
    </citation>
    <scope>FUNCTION</scope>
    <scope>CATALYTIC ACTIVITY</scope>
    <scope>SUBSTRATE SPECIFICITY</scope>
    <scope>DISRUPTION PHENOTYPE</scope>
    <scope>INDUCTION BY ACETONE</scope>
    <scope>SUBUNIT</scope>
    <source>
        <strain>ATCC 700084 / mc(2)155</strain>
    </source>
</reference>
<reference key="5">
    <citation type="journal article" date="2011" name="J. Bacteriol.">
        <title>Identification of the regulator gene responsible for the acetone-responsive expression of the binuclear iron monooxygenase gene cluster in mycobacteria.</title>
        <authorList>
            <person name="Furuya T."/>
            <person name="Hirose S."/>
            <person name="Semba H."/>
            <person name="Kino K."/>
        </authorList>
    </citation>
    <scope>INDUCTION BY MIMR</scope>
    <source>
        <strain>ATCC 700084 / mc(2)155</strain>
    </source>
</reference>
<reference key="6">
    <citation type="journal article" date="2013" name="Appl. Environ. Microbiol.">
        <title>Reconstitution of active mycobacterial binuclear iron monooxygenase complex in Escherichia coli.</title>
        <authorList>
            <person name="Furuya T."/>
            <person name="Hayashi M."/>
            <person name="Kino K."/>
        </authorList>
    </citation>
    <scope>FUNCTION AS A PHENOL 4-MONOOXYGENASE</scope>
    <scope>CATALYTIC ACTIVITY</scope>
    <source>
        <strain>ATCC 700084 / mc(2)155</strain>
    </source>
</reference>
<reference key="7">
    <citation type="journal article" date="2013" name="FEBS J.">
        <title>The mycobacterial binuclear iron monooxygenases require a specific chaperonin-like protein for functional expression in a heterologous host.</title>
        <authorList>
            <person name="Furuya T."/>
            <person name="Hayashi M."/>
            <person name="Semba H."/>
            <person name="Kino K."/>
        </authorList>
    </citation>
    <scope>FUNCTION AS A PHENOL 4-MONOOXYGENASE</scope>
    <scope>CATALYTIC ACTIVITY</scope>
    <scope>SUBUNIT</scope>
    <source>
        <strain>ATCC 700084 / mc(2)155</strain>
    </source>
</reference>
<reference key="8">
    <citation type="journal article" date="2015" name="FEMS Microbiol. Lett.">
        <title>Catalytic function of the mycobacterial binuclear iron monooxygenase in acetone metabolism.</title>
        <authorList>
            <person name="Furuya T."/>
            <person name="Nakao T."/>
            <person name="Kino K."/>
        </authorList>
    </citation>
    <scope>FUNCTION AS AN ACETONE 1-MONOOXYGENASE</scope>
    <scope>CATALYTIC ACTIVITY</scope>
    <scope>SUBSTRATE SPECIFICITY</scope>
    <source>
        <strain>ATCC 700084 / mc(2)155</strain>
    </source>
</reference>
<keyword id="KW-0408">Iron</keyword>
<keyword id="KW-0479">Metal-binding</keyword>
<keyword id="KW-0503">Monooxygenase</keyword>
<keyword id="KW-0520">NAD</keyword>
<keyword id="KW-0560">Oxidoreductase</keyword>
<keyword id="KW-1185">Reference proteome</keyword>
<dbReference type="EC" id="1.14.13.227" evidence="10"/>
<dbReference type="EMBL" id="CP000480">
    <property type="protein sequence ID" value="ABK75704.1"/>
    <property type="molecule type" value="Genomic_DNA"/>
</dbReference>
<dbReference type="EMBL" id="CP001663">
    <property type="protein sequence ID" value="AFP38398.1"/>
    <property type="molecule type" value="Genomic_DNA"/>
</dbReference>
<dbReference type="RefSeq" id="WP_003893346.1">
    <property type="nucleotide sequence ID" value="NZ_SIJM01000020.1"/>
</dbReference>
<dbReference type="RefSeq" id="YP_886336.1">
    <property type="nucleotide sequence ID" value="NC_008596.1"/>
</dbReference>
<dbReference type="SMR" id="A0QTU8"/>
<dbReference type="STRING" id="246196.MSMEG_1971"/>
<dbReference type="PaxDb" id="246196-MSMEI_1927"/>
<dbReference type="KEGG" id="msb:LJ00_09835"/>
<dbReference type="KEGG" id="msg:MSMEI_1927"/>
<dbReference type="KEGG" id="msm:MSMEG_1971"/>
<dbReference type="PATRIC" id="fig|246196.19.peg.1948"/>
<dbReference type="eggNOG" id="COG3350">
    <property type="taxonomic scope" value="Bacteria"/>
</dbReference>
<dbReference type="OrthoDB" id="7591937at2"/>
<dbReference type="BRENDA" id="1.14.13.222">
    <property type="organism ID" value="3512"/>
</dbReference>
<dbReference type="Proteomes" id="UP000000757">
    <property type="component" value="Chromosome"/>
</dbReference>
<dbReference type="Proteomes" id="UP000006158">
    <property type="component" value="Chromosome"/>
</dbReference>
<dbReference type="GO" id="GO:0046872">
    <property type="term" value="F:metal ion binding"/>
    <property type="evidence" value="ECO:0007669"/>
    <property type="project" value="UniProtKB-KW"/>
</dbReference>
<dbReference type="GO" id="GO:0004497">
    <property type="term" value="F:monooxygenase activity"/>
    <property type="evidence" value="ECO:0007669"/>
    <property type="project" value="UniProtKB-KW"/>
</dbReference>
<dbReference type="Gene3D" id="1.10.620.20">
    <property type="entry name" value="Ribonucleotide Reductase, subunit A"/>
    <property type="match status" value="1"/>
</dbReference>
<dbReference type="InterPro" id="IPR009078">
    <property type="entry name" value="Ferritin-like_SF"/>
</dbReference>
<dbReference type="InterPro" id="IPR003430">
    <property type="entry name" value="Phenol_Hydrox"/>
</dbReference>
<dbReference type="InterPro" id="IPR012348">
    <property type="entry name" value="RNR-like"/>
</dbReference>
<dbReference type="Pfam" id="PF02332">
    <property type="entry name" value="Phenol_Hydrox"/>
    <property type="match status" value="1"/>
</dbReference>
<dbReference type="SUPFAM" id="SSF47240">
    <property type="entry name" value="Ferritin-like"/>
    <property type="match status" value="1"/>
</dbReference>
<proteinExistence type="evidence at protein level"/>
<protein>
    <recommendedName>
        <fullName evidence="7">Propane 2-monooxygenase, hydroxylase component large subunit</fullName>
        <ecNumber evidence="10">1.14.13.227</ecNumber>
    </recommendedName>
    <alternativeName>
        <fullName evidence="8">Acetone 1-monooxygenase</fullName>
    </alternativeName>
    <alternativeName>
        <fullName evidence="8">Methylethylketone 1-monooxygenase</fullName>
    </alternativeName>
    <alternativeName>
        <fullName evidence="7">Phenol 4-monooxygenase</fullName>
    </alternativeName>
</protein>
<evidence type="ECO:0000250" key="1">
    <source>
        <dbReference type="UniProtKB" id="Q00456"/>
    </source>
</evidence>
<evidence type="ECO:0000269" key="2">
    <source>
    </source>
</evidence>
<evidence type="ECO:0000269" key="3">
    <source>
    </source>
</evidence>
<evidence type="ECO:0000269" key="4">
    <source>
    </source>
</evidence>
<evidence type="ECO:0000269" key="5">
    <source>
    </source>
</evidence>
<evidence type="ECO:0000269" key="6">
    <source>
    </source>
</evidence>
<evidence type="ECO:0000303" key="7">
    <source>
    </source>
</evidence>
<evidence type="ECO:0000303" key="8">
    <source>
    </source>
</evidence>
<evidence type="ECO:0000305" key="9"/>
<evidence type="ECO:0000305" key="10">
    <source>
    </source>
</evidence>
<evidence type="ECO:0000312" key="11">
    <source>
        <dbReference type="EMBL" id="ABK75704.1"/>
    </source>
</evidence>
<evidence type="ECO:0000312" key="12">
    <source>
        <dbReference type="EMBL" id="AFP38398.1"/>
    </source>
</evidence>
<evidence type="ECO:0000312" key="13">
    <source>
        <dbReference type="Proteomes" id="UP000000757"/>
    </source>
</evidence>
<evidence type="ECO:0000312" key="14">
    <source>
        <dbReference type="Proteomes" id="UP000006158"/>
    </source>
</evidence>
<comment type="function">
    <text evidence="2 4 5 6">Component of the propane 2-monooxygenase multicomponent enzyme system which is involved in the degradation of propane via the O2-dependent hydroxylation of propane (PubMed:21183637). Also involved in the degradation of acetone via the O2-dependent hydroxylation of acetone (PubMed:26293913). Also able to catalyze the oxidation of phenol, methylethylketone (2-butanone), 1-propanol and 2-propanol (PubMed:21183637, PubMed:23171424, PubMed:23892738, PubMed:26293913).</text>
</comment>
<comment type="catalytic activity">
    <reaction evidence="10">
        <text>propane + NADH + O2 + H(+) = propan-2-ol + NAD(+) + H2O</text>
        <dbReference type="Rhea" id="RHEA:49992"/>
        <dbReference type="ChEBI" id="CHEBI:15377"/>
        <dbReference type="ChEBI" id="CHEBI:15378"/>
        <dbReference type="ChEBI" id="CHEBI:15379"/>
        <dbReference type="ChEBI" id="CHEBI:17824"/>
        <dbReference type="ChEBI" id="CHEBI:32879"/>
        <dbReference type="ChEBI" id="CHEBI:57540"/>
        <dbReference type="ChEBI" id="CHEBI:57945"/>
        <dbReference type="EC" id="1.14.13.227"/>
    </reaction>
</comment>
<comment type="catalytic activity">
    <reaction evidence="6">
        <text>acetone + NADH + O2 + H(+) = hydroxyacetone + NAD(+) + H2O</text>
        <dbReference type="Rhea" id="RHEA:55788"/>
        <dbReference type="ChEBI" id="CHEBI:15347"/>
        <dbReference type="ChEBI" id="CHEBI:15377"/>
        <dbReference type="ChEBI" id="CHEBI:15378"/>
        <dbReference type="ChEBI" id="CHEBI:15379"/>
        <dbReference type="ChEBI" id="CHEBI:27957"/>
        <dbReference type="ChEBI" id="CHEBI:57540"/>
        <dbReference type="ChEBI" id="CHEBI:57945"/>
    </reaction>
</comment>
<comment type="catalytic activity">
    <reaction evidence="6">
        <text>butan-2-one + NADH + O2 + H(+) = 1-hydroxy-2-butanone + NAD(+) + H2O</text>
        <dbReference type="Rhea" id="RHEA:55792"/>
        <dbReference type="ChEBI" id="CHEBI:15377"/>
        <dbReference type="ChEBI" id="CHEBI:15378"/>
        <dbReference type="ChEBI" id="CHEBI:15379"/>
        <dbReference type="ChEBI" id="CHEBI:28398"/>
        <dbReference type="ChEBI" id="CHEBI:57540"/>
        <dbReference type="ChEBI" id="CHEBI:57945"/>
        <dbReference type="ChEBI" id="CHEBI:88390"/>
    </reaction>
</comment>
<comment type="catalytic activity">
    <reaction evidence="4 5 10">
        <text>phenol + NADH + O2 + H(+) = hydroquinone + NAD(+) + H2O</text>
        <dbReference type="Rhea" id="RHEA:55796"/>
        <dbReference type="ChEBI" id="CHEBI:15377"/>
        <dbReference type="ChEBI" id="CHEBI:15378"/>
        <dbReference type="ChEBI" id="CHEBI:15379"/>
        <dbReference type="ChEBI" id="CHEBI:15882"/>
        <dbReference type="ChEBI" id="CHEBI:17594"/>
        <dbReference type="ChEBI" id="CHEBI:57540"/>
        <dbReference type="ChEBI" id="CHEBI:57945"/>
    </reaction>
</comment>
<comment type="cofactor">
    <cofactor evidence="1">
        <name>Fe(2+)</name>
        <dbReference type="ChEBI" id="CHEBI:29033"/>
    </cofactor>
    <text evidence="1">Binds 2 Fe(2+) ions per subunit.</text>
</comment>
<comment type="subunit">
    <text evidence="4 10">The propane 2-monooxygenase multicomponent enzyme system is composed of an electron transfer component and a monooxygenase component interacting with the effector protein MimD. The electron transfer component is composed of a reductase (MimB), and the monooxygenase component is formed by a large subunit (MimA) and a small subunit (MimC) (PubMed:21183637). Requires the presence of the chaperonin-like protein MimG to ensure a productive folding, resulting of a soluble MimA, which leads to the active form of MimABCD (PubMed:23171424).</text>
</comment>
<comment type="induction">
    <text evidence="2 3">By acetone (PubMed:21183637). Transcriptionally activated by MimR (PubMed:21856847).</text>
</comment>
<comment type="disruption phenotype">
    <text evidence="2">Cells lacking this gene are unable to grow on phenol, acetone and methylethylketone (2-butanone).</text>
</comment>
<comment type="similarity">
    <text evidence="9">Belongs to the TmoA/XamoA family.</text>
</comment>
<accession>A0QTU8</accession>
<accession>I7FI00</accession>